<evidence type="ECO:0000255" key="1"/>
<evidence type="ECO:0000256" key="2">
    <source>
        <dbReference type="SAM" id="MobiDB-lite"/>
    </source>
</evidence>
<evidence type="ECO:0000305" key="3"/>
<reference key="1">
    <citation type="journal article" date="2002" name="Nature">
        <title>The genome sequence of Schizosaccharomyces pombe.</title>
        <authorList>
            <person name="Wood V."/>
            <person name="Gwilliam R."/>
            <person name="Rajandream M.A."/>
            <person name="Lyne M.H."/>
            <person name="Lyne R."/>
            <person name="Stewart A."/>
            <person name="Sgouros J.G."/>
            <person name="Peat N."/>
            <person name="Hayles J."/>
            <person name="Baker S.G."/>
            <person name="Basham D."/>
            <person name="Bowman S."/>
            <person name="Brooks K."/>
            <person name="Brown D."/>
            <person name="Brown S."/>
            <person name="Chillingworth T."/>
            <person name="Churcher C.M."/>
            <person name="Collins M."/>
            <person name="Connor R."/>
            <person name="Cronin A."/>
            <person name="Davis P."/>
            <person name="Feltwell T."/>
            <person name="Fraser A."/>
            <person name="Gentles S."/>
            <person name="Goble A."/>
            <person name="Hamlin N."/>
            <person name="Harris D.E."/>
            <person name="Hidalgo J."/>
            <person name="Hodgson G."/>
            <person name="Holroyd S."/>
            <person name="Hornsby T."/>
            <person name="Howarth S."/>
            <person name="Huckle E.J."/>
            <person name="Hunt S."/>
            <person name="Jagels K."/>
            <person name="James K.D."/>
            <person name="Jones L."/>
            <person name="Jones M."/>
            <person name="Leather S."/>
            <person name="McDonald S."/>
            <person name="McLean J."/>
            <person name="Mooney P."/>
            <person name="Moule S."/>
            <person name="Mungall K.L."/>
            <person name="Murphy L.D."/>
            <person name="Niblett D."/>
            <person name="Odell C."/>
            <person name="Oliver K."/>
            <person name="O'Neil S."/>
            <person name="Pearson D."/>
            <person name="Quail M.A."/>
            <person name="Rabbinowitsch E."/>
            <person name="Rutherford K.M."/>
            <person name="Rutter S."/>
            <person name="Saunders D."/>
            <person name="Seeger K."/>
            <person name="Sharp S."/>
            <person name="Skelton J."/>
            <person name="Simmonds M.N."/>
            <person name="Squares R."/>
            <person name="Squares S."/>
            <person name="Stevens K."/>
            <person name="Taylor K."/>
            <person name="Taylor R.G."/>
            <person name="Tivey A."/>
            <person name="Walsh S.V."/>
            <person name="Warren T."/>
            <person name="Whitehead S."/>
            <person name="Woodward J.R."/>
            <person name="Volckaert G."/>
            <person name="Aert R."/>
            <person name="Robben J."/>
            <person name="Grymonprez B."/>
            <person name="Weltjens I."/>
            <person name="Vanstreels E."/>
            <person name="Rieger M."/>
            <person name="Schaefer M."/>
            <person name="Mueller-Auer S."/>
            <person name="Gabel C."/>
            <person name="Fuchs M."/>
            <person name="Duesterhoeft A."/>
            <person name="Fritzc C."/>
            <person name="Holzer E."/>
            <person name="Moestl D."/>
            <person name="Hilbert H."/>
            <person name="Borzym K."/>
            <person name="Langer I."/>
            <person name="Beck A."/>
            <person name="Lehrach H."/>
            <person name="Reinhardt R."/>
            <person name="Pohl T.M."/>
            <person name="Eger P."/>
            <person name="Zimmermann W."/>
            <person name="Wedler H."/>
            <person name="Wambutt R."/>
            <person name="Purnelle B."/>
            <person name="Goffeau A."/>
            <person name="Cadieu E."/>
            <person name="Dreano S."/>
            <person name="Gloux S."/>
            <person name="Lelaure V."/>
            <person name="Mottier S."/>
            <person name="Galibert F."/>
            <person name="Aves S.J."/>
            <person name="Xiang Z."/>
            <person name="Hunt C."/>
            <person name="Moore K."/>
            <person name="Hurst S.M."/>
            <person name="Lucas M."/>
            <person name="Rochet M."/>
            <person name="Gaillardin C."/>
            <person name="Tallada V.A."/>
            <person name="Garzon A."/>
            <person name="Thode G."/>
            <person name="Daga R.R."/>
            <person name="Cruzado L."/>
            <person name="Jimenez J."/>
            <person name="Sanchez M."/>
            <person name="del Rey F."/>
            <person name="Benito J."/>
            <person name="Dominguez A."/>
            <person name="Revuelta J.L."/>
            <person name="Moreno S."/>
            <person name="Armstrong J."/>
            <person name="Forsburg S.L."/>
            <person name="Cerutti L."/>
            <person name="Lowe T."/>
            <person name="McCombie W.R."/>
            <person name="Paulsen I."/>
            <person name="Potashkin J."/>
            <person name="Shpakovski G.V."/>
            <person name="Ussery D."/>
            <person name="Barrell B.G."/>
            <person name="Nurse P."/>
        </authorList>
    </citation>
    <scope>NUCLEOTIDE SEQUENCE [LARGE SCALE GENOMIC DNA]</scope>
    <source>
        <strain>972 / ATCC 24843</strain>
    </source>
</reference>
<proteinExistence type="inferred from homology"/>
<organism>
    <name type="scientific">Schizosaccharomyces pombe (strain 972 / ATCC 24843)</name>
    <name type="common">Fission yeast</name>
    <dbReference type="NCBI Taxonomy" id="284812"/>
    <lineage>
        <taxon>Eukaryota</taxon>
        <taxon>Fungi</taxon>
        <taxon>Dikarya</taxon>
        <taxon>Ascomycota</taxon>
        <taxon>Taphrinomycotina</taxon>
        <taxon>Schizosaccharomycetes</taxon>
        <taxon>Schizosaccharomycetales</taxon>
        <taxon>Schizosaccharomycetaceae</taxon>
        <taxon>Schizosaccharomyces</taxon>
    </lineage>
</organism>
<protein>
    <recommendedName>
        <fullName>UPF0674 endoplasmic reticulum membrane protein C2G5.01</fullName>
    </recommendedName>
</protein>
<gene>
    <name type="ORF">SPBC2G5.01</name>
</gene>
<name>YGX1_SCHPO</name>
<feature type="chain" id="PRO_0000353797" description="UPF0674 endoplasmic reticulum membrane protein C2G5.01">
    <location>
        <begin position="1"/>
        <end position="374"/>
    </location>
</feature>
<feature type="transmembrane region" description="Helical" evidence="1">
    <location>
        <begin position="49"/>
        <end position="68"/>
    </location>
</feature>
<feature type="region of interest" description="Disordered" evidence="2">
    <location>
        <begin position="335"/>
        <end position="374"/>
    </location>
</feature>
<feature type="compositionally biased region" description="Basic and acidic residues" evidence="2">
    <location>
        <begin position="349"/>
        <end position="363"/>
    </location>
</feature>
<feature type="compositionally biased region" description="Basic residues" evidence="2">
    <location>
        <begin position="364"/>
        <end position="374"/>
    </location>
</feature>
<feature type="glycosylation site" description="N-linked (GlcNAc...) asparagine" evidence="1">
    <location>
        <position position="287"/>
    </location>
</feature>
<sequence length="374" mass="43098">MINKKLLFLVFALAKGVLADEEDEYEEDYNMNPELENPGMFKHVDWRDFRLEFVILACFFLYVFSFITQKKKNQKIASRWYGSLQSSFRQQFAQYGPGPNSSPIIYDSPTEFSSYLTGRLNVKNVYTTLQLFPRQDLLAYSLNQIVEILLGNVMSSVLPVADRFQFDLTLADQNLKAERFVFAIVHKDCMRILREIRYDLSFTRISSSPYLPETHVLMSENNECSQAIFEIPEFMSSINECIENLEYFIVTDQPSVPPATEKDYVTKPRIEASIRIKKITSLSGLSNATGSALFNSLLLVADSCPKFQWRPEVSKKLTSARKLAFEQVVHASAAKAAKKKVKSSGDISKLSESDQKKRMERERQRKMRRRAKKM</sequence>
<keyword id="KW-0256">Endoplasmic reticulum</keyword>
<keyword id="KW-0325">Glycoprotein</keyword>
<keyword id="KW-0472">Membrane</keyword>
<keyword id="KW-1185">Reference proteome</keyword>
<keyword id="KW-0812">Transmembrane</keyword>
<keyword id="KW-1133">Transmembrane helix</keyword>
<dbReference type="EMBL" id="CU329671">
    <property type="protein sequence ID" value="CAA21877.1"/>
    <property type="molecule type" value="Genomic_DNA"/>
</dbReference>
<dbReference type="PIR" id="T40158">
    <property type="entry name" value="T40158"/>
</dbReference>
<dbReference type="RefSeq" id="NP_596062.1">
    <property type="nucleotide sequence ID" value="NM_001021973.2"/>
</dbReference>
<dbReference type="SMR" id="O94280"/>
<dbReference type="BioGRID" id="276889">
    <property type="interactions" value="26"/>
</dbReference>
<dbReference type="FunCoup" id="O94280">
    <property type="interactions" value="304"/>
</dbReference>
<dbReference type="STRING" id="284812.O94280"/>
<dbReference type="iPTMnet" id="O94280"/>
<dbReference type="PaxDb" id="4896-SPBC2G5.01.1"/>
<dbReference type="EnsemblFungi" id="SPBC2G5.01.1">
    <property type="protein sequence ID" value="SPBC2G5.01.1:pep"/>
    <property type="gene ID" value="SPBC2G5.01"/>
</dbReference>
<dbReference type="KEGG" id="spo:2540360"/>
<dbReference type="PomBase" id="SPBC2G5.01"/>
<dbReference type="VEuPathDB" id="FungiDB:SPBC2G5.01"/>
<dbReference type="eggNOG" id="KOG2357">
    <property type="taxonomic scope" value="Eukaryota"/>
</dbReference>
<dbReference type="HOGENOM" id="CLU_727922_0_0_1"/>
<dbReference type="InParanoid" id="O94280"/>
<dbReference type="OMA" id="MHLVRDM"/>
<dbReference type="PhylomeDB" id="O94280"/>
<dbReference type="PRO" id="PR:O94280"/>
<dbReference type="Proteomes" id="UP000002485">
    <property type="component" value="Chromosome II"/>
</dbReference>
<dbReference type="GO" id="GO:0005783">
    <property type="term" value="C:endoplasmic reticulum"/>
    <property type="evidence" value="ECO:0007005"/>
    <property type="project" value="PomBase"/>
</dbReference>
<dbReference type="GO" id="GO:0160005">
    <property type="term" value="C:PAT complex"/>
    <property type="evidence" value="ECO:0000304"/>
    <property type="project" value="PomBase"/>
</dbReference>
<dbReference type="GO" id="GO:0005509">
    <property type="term" value="F:calcium ion binding"/>
    <property type="evidence" value="ECO:0000318"/>
    <property type="project" value="GO_Central"/>
</dbReference>
<dbReference type="GO" id="GO:0044183">
    <property type="term" value="F:protein folding chaperone"/>
    <property type="evidence" value="ECO:0000255"/>
    <property type="project" value="PomBase"/>
</dbReference>
<dbReference type="GO" id="GO:0032469">
    <property type="term" value="P:endoplasmic reticulum calcium ion homeostasis"/>
    <property type="evidence" value="ECO:0007669"/>
    <property type="project" value="InterPro"/>
</dbReference>
<dbReference type="GO" id="GO:0045048">
    <property type="term" value="P:protein insertion into ER membrane"/>
    <property type="evidence" value="ECO:0000250"/>
    <property type="project" value="PomBase"/>
</dbReference>
<dbReference type="InterPro" id="IPR012879">
    <property type="entry name" value="CCDC47"/>
</dbReference>
<dbReference type="PANTHER" id="PTHR12883">
    <property type="entry name" value="ADIPOCYTE-SPECIFIC PROTEIN 4-RELATED"/>
    <property type="match status" value="1"/>
</dbReference>
<dbReference type="PANTHER" id="PTHR12883:SF0">
    <property type="entry name" value="PAT COMPLEX SUBUNIT CCDC47"/>
    <property type="match status" value="1"/>
</dbReference>
<dbReference type="Pfam" id="PF07946">
    <property type="entry name" value="CCDC47"/>
    <property type="match status" value="1"/>
</dbReference>
<accession>O94280</accession>
<comment type="subcellular location">
    <subcellularLocation>
        <location evidence="3">Endoplasmic reticulum membrane</location>
        <topology evidence="3">Single-pass membrane protein</topology>
    </subcellularLocation>
</comment>
<comment type="similarity">
    <text evidence="3">Belongs to the UPF0674 family.</text>
</comment>